<sequence length="975" mass="105649">MNRVIEIHAHYDQRQLSQSPNTNFLVHHPYLTLIPKFLLGALIVYAPYSFAEMELAISGHKQGKDRDTFTMISSCPEGTNYIINRKLILSDFSLLNKVSSGGAFRNLAGKISFLGKNSSASIHFKHININGFGAGVFSESSIEFTDLRKLVAFGSESTGGIFTAKEDISFKNNHHIAFRNNITKGNGGVIQLQGDMKGSVSFVDQRGAIIFTNNQAVTSSSMKHSGRGGAISGDFAGSRILFLNNQQITFEGNSAVHGGAIYNKNGLVEFLGNAGPLAFKENTTIANGGAIYTSNFKANQQTSPILFSQNHANKKGGAIYAQYVNLEQNQDTIRFEKNTAKEGGGAITSSQCSITAHNTIIFSDNAAGDLGGGAILLEGKKPSLTLIAHSGNIAFSGNTMLHITKKASLDRHNSILIKEAPYKIQLAANKNHSIHFFDPVMALSASSSPIQINAPEYETPFFSPKGMIVFSGANLLDDAREDVANRTSIFNQPVHLYNGTLSIENGAHLIVQSFKQTGGRISLSPGSSLALYTMNSFFHGNISSKEPLEINGLSFGVDISPSNLQAEIRAGNAPLRLSGSPSIHDPEGLFYENRDTAASPYQMEILLTSDKIVDISKFTTDSLVTNKQSGFQGAWHFSWQPNTINNTKQKILRASWLPTGEYVLESNRVGRAVPNSLWSTFLLLQTASHNLGDHLCNNRSLIPTSYFGVLIGGTGAEMSTHSSEEESFISRLGATGTSIIRLTPSLTLSGGGSHMFGDSFVADLPEHITSEGIVQNVGLTHVWGPLTVNSTLCAALDHNAMVRICSKKDHTYGKWDTFGMRGTLGASYTFLEYDQTMRVFSFANIEATNILQRAFTETGYNPRSFSKTKLLNIAIPIGIGYEFCLGNSSFALLGKGSIGYSRDIKRENPSTLAHLAMNDFAWTTNGCSVPTSAHTLANQLILRYKACSLYITAYTINREGKNLSNSLSCGGYVGF</sequence>
<evidence type="ECO:0000255" key="1"/>
<evidence type="ECO:0000255" key="2">
    <source>
        <dbReference type="PROSITE-ProRule" id="PRU00556"/>
    </source>
</evidence>
<evidence type="ECO:0000305" key="3"/>
<dbReference type="EMBL" id="AE001273">
    <property type="protein sequence ID" value="AAC68009.1"/>
    <property type="molecule type" value="Genomic_DNA"/>
</dbReference>
<dbReference type="PIR" id="F71518">
    <property type="entry name" value="F71518"/>
</dbReference>
<dbReference type="RefSeq" id="NP_219922.1">
    <property type="nucleotide sequence ID" value="NC_000117.1"/>
</dbReference>
<dbReference type="RefSeq" id="WP_010725190.1">
    <property type="nucleotide sequence ID" value="NC_000117.1"/>
</dbReference>
<dbReference type="STRING" id="272561.CT_412"/>
<dbReference type="TCDB" id="1.B.12.1.7">
    <property type="family name" value="the autotransporter-1 (at-1) family"/>
</dbReference>
<dbReference type="EnsemblBacteria" id="AAC68009">
    <property type="protein sequence ID" value="AAC68009"/>
    <property type="gene ID" value="CT_412"/>
</dbReference>
<dbReference type="GeneID" id="884704"/>
<dbReference type="KEGG" id="ctr:CT_412"/>
<dbReference type="PATRIC" id="fig|272561.5.peg.443"/>
<dbReference type="HOGENOM" id="CLU_004549_1_1_0"/>
<dbReference type="InParanoid" id="O84417"/>
<dbReference type="OrthoDB" id="18852at2"/>
<dbReference type="Proteomes" id="UP000000431">
    <property type="component" value="Chromosome"/>
</dbReference>
<dbReference type="GO" id="GO:0009279">
    <property type="term" value="C:cell outer membrane"/>
    <property type="evidence" value="ECO:0007669"/>
    <property type="project" value="UniProtKB-SubCell"/>
</dbReference>
<dbReference type="GO" id="GO:0005576">
    <property type="term" value="C:extracellular region"/>
    <property type="evidence" value="ECO:0007669"/>
    <property type="project" value="UniProtKB-KW"/>
</dbReference>
<dbReference type="GO" id="GO:0043130">
    <property type="term" value="F:ubiquitin binding"/>
    <property type="evidence" value="ECO:0000318"/>
    <property type="project" value="GO_Central"/>
</dbReference>
<dbReference type="GO" id="GO:0000724">
    <property type="term" value="P:double-strand break repair via homologous recombination"/>
    <property type="evidence" value="ECO:0000318"/>
    <property type="project" value="GO_Central"/>
</dbReference>
<dbReference type="InterPro" id="IPR005546">
    <property type="entry name" value="Autotransporte_beta"/>
</dbReference>
<dbReference type="InterPro" id="IPR036709">
    <property type="entry name" value="Autotransporte_beta_dom_sf"/>
</dbReference>
<dbReference type="InterPro" id="IPR011427">
    <property type="entry name" value="Polymorphic_membr_middle"/>
</dbReference>
<dbReference type="InterPro" id="IPR003368">
    <property type="entry name" value="POMP_repeat"/>
</dbReference>
<dbReference type="InterPro" id="IPR051246">
    <property type="entry name" value="WDR48"/>
</dbReference>
<dbReference type="NCBIfam" id="TIGR01376">
    <property type="entry name" value="POMP_repeat"/>
    <property type="match status" value="4"/>
</dbReference>
<dbReference type="PANTHER" id="PTHR19862">
    <property type="entry name" value="WD REPEAT-CONTAINING PROTEIN 48"/>
    <property type="match status" value="1"/>
</dbReference>
<dbReference type="PANTHER" id="PTHR19862:SF14">
    <property type="entry name" value="WD REPEAT-CONTAINING PROTEIN 48"/>
    <property type="match status" value="1"/>
</dbReference>
<dbReference type="Pfam" id="PF02415">
    <property type="entry name" value="Chlam_PMP"/>
    <property type="match status" value="5"/>
</dbReference>
<dbReference type="Pfam" id="PF07548">
    <property type="entry name" value="ChlamPMP_M"/>
    <property type="match status" value="1"/>
</dbReference>
<dbReference type="SUPFAM" id="SSF103515">
    <property type="entry name" value="Autotransporter"/>
    <property type="match status" value="1"/>
</dbReference>
<dbReference type="PROSITE" id="PS51208">
    <property type="entry name" value="AUTOTRANSPORTER"/>
    <property type="match status" value="1"/>
</dbReference>
<protein>
    <recommendedName>
        <fullName>Probable outer membrane protein PmpA</fullName>
    </recommendedName>
    <alternativeName>
        <fullName>Polymorphic membrane protein A</fullName>
    </alternativeName>
</protein>
<name>PMPA_CHLTR</name>
<reference key="1">
    <citation type="journal article" date="1998" name="Science">
        <title>Genome sequence of an obligate intracellular pathogen of humans: Chlamydia trachomatis.</title>
        <authorList>
            <person name="Stephens R.S."/>
            <person name="Kalman S."/>
            <person name="Lammel C.J."/>
            <person name="Fan J."/>
            <person name="Marathe R."/>
            <person name="Aravind L."/>
            <person name="Mitchell W.P."/>
            <person name="Olinger L."/>
            <person name="Tatusov R.L."/>
            <person name="Zhao Q."/>
            <person name="Koonin E.V."/>
            <person name="Davis R.W."/>
        </authorList>
    </citation>
    <scope>NUCLEOTIDE SEQUENCE [LARGE SCALE GENOMIC DNA]</scope>
    <source>
        <strain>ATCC VR-885 / DSM 19411 / UW-3/Cx</strain>
    </source>
</reference>
<proteinExistence type="evidence at transcript level"/>
<keyword id="KW-0998">Cell outer membrane</keyword>
<keyword id="KW-0134">Cell wall</keyword>
<keyword id="KW-0472">Membrane</keyword>
<keyword id="KW-1185">Reference proteome</keyword>
<keyword id="KW-0964">Secreted</keyword>
<keyword id="KW-0732">Signal</keyword>
<keyword id="KW-0812">Transmembrane</keyword>
<keyword id="KW-1134">Transmembrane beta strand</keyword>
<comment type="subcellular location">
    <subcellularLocation>
        <location>Secreted</location>
        <location>Cell wall</location>
    </subcellularLocation>
    <subcellularLocation>
        <location evidence="3">Cell outer membrane</location>
        <topology evidence="3">Peripheral membrane protein</topology>
        <orientation evidence="3">Extracellular side</orientation>
    </subcellularLocation>
</comment>
<comment type="developmental stage">
    <text>Elementary body.</text>
</comment>
<comment type="similarity">
    <text evidence="3">Belongs to the PMP outer membrane protein family.</text>
</comment>
<organism>
    <name type="scientific">Chlamydia trachomatis serovar D (strain ATCC VR-885 / DSM 19411 / UW-3/Cx)</name>
    <dbReference type="NCBI Taxonomy" id="272561"/>
    <lineage>
        <taxon>Bacteria</taxon>
        <taxon>Pseudomonadati</taxon>
        <taxon>Chlamydiota</taxon>
        <taxon>Chlamydiia</taxon>
        <taxon>Chlamydiales</taxon>
        <taxon>Chlamydiaceae</taxon>
        <taxon>Chlamydia/Chlamydophila group</taxon>
        <taxon>Chlamydia</taxon>
    </lineage>
</organism>
<feature type="signal peptide" evidence="1">
    <location>
        <begin position="1"/>
        <end position="51"/>
    </location>
</feature>
<feature type="chain" id="PRO_0000024717" description="Probable outer membrane protein PmpA">
    <location>
        <begin position="52"/>
        <end position="975"/>
    </location>
</feature>
<feature type="domain" description="Autotransporter" evidence="2">
    <location>
        <begin position="699"/>
        <end position="975"/>
    </location>
</feature>
<gene>
    <name type="primary">pmpA</name>
    <name type="ordered locus">CT_412</name>
</gene>
<accession>O84417</accession>